<feature type="chain" id="PRO_0000433611" description="Methylcytosine dioxygenase TET">
    <location>
        <begin position="1"/>
        <end position="2860"/>
    </location>
</feature>
<feature type="zinc finger region" description="CXXC-type" evidence="2">
    <location>
        <begin position="591"/>
        <end position="631"/>
    </location>
</feature>
<feature type="region of interest" description="Disordered" evidence="3">
    <location>
        <begin position="51"/>
        <end position="255"/>
    </location>
</feature>
<feature type="region of interest" description="Disordered" evidence="3">
    <location>
        <begin position="457"/>
        <end position="562"/>
    </location>
</feature>
<feature type="region of interest" description="Disordered" evidence="3">
    <location>
        <begin position="641"/>
        <end position="734"/>
    </location>
</feature>
<feature type="region of interest" description="Disordered" evidence="3">
    <location>
        <begin position="771"/>
        <end position="810"/>
    </location>
</feature>
<feature type="region of interest" description="Disordered" evidence="3">
    <location>
        <begin position="920"/>
        <end position="1113"/>
    </location>
</feature>
<feature type="region of interest" description="Disordered" evidence="3">
    <location>
        <begin position="1130"/>
        <end position="1155"/>
    </location>
</feature>
<feature type="region of interest" description="Disordered" evidence="3">
    <location>
        <begin position="1170"/>
        <end position="1195"/>
    </location>
</feature>
<feature type="region of interest" description="Disordered" evidence="3">
    <location>
        <begin position="1209"/>
        <end position="1356"/>
    </location>
</feature>
<feature type="region of interest" description="Disordered" evidence="3">
    <location>
        <begin position="1437"/>
        <end position="1460"/>
    </location>
</feature>
<feature type="region of interest" description="Interaction with wds" evidence="5">
    <location>
        <begin position="1657"/>
        <end position="2666"/>
    </location>
</feature>
<feature type="region of interest" description="Disordered" evidence="3">
    <location>
        <begin position="1966"/>
        <end position="2115"/>
    </location>
</feature>
<feature type="region of interest" description="Disordered" evidence="3">
    <location>
        <begin position="2198"/>
        <end position="2229"/>
    </location>
</feature>
<feature type="region of interest" description="Disordered" evidence="3">
    <location>
        <begin position="2263"/>
        <end position="2334"/>
    </location>
</feature>
<feature type="region of interest" description="Disordered" evidence="3">
    <location>
        <begin position="2350"/>
        <end position="2371"/>
    </location>
</feature>
<feature type="region of interest" description="Disordered" evidence="3">
    <location>
        <begin position="2422"/>
        <end position="2444"/>
    </location>
</feature>
<feature type="region of interest" description="Disordered" evidence="3">
    <location>
        <begin position="2536"/>
        <end position="2598"/>
    </location>
</feature>
<feature type="region of interest" description="Disordered" evidence="3">
    <location>
        <begin position="2729"/>
        <end position="2860"/>
    </location>
</feature>
<feature type="compositionally biased region" description="Basic residues" evidence="3">
    <location>
        <begin position="57"/>
        <end position="70"/>
    </location>
</feature>
<feature type="compositionally biased region" description="Low complexity" evidence="3">
    <location>
        <begin position="71"/>
        <end position="181"/>
    </location>
</feature>
<feature type="compositionally biased region" description="Low complexity" evidence="3">
    <location>
        <begin position="191"/>
        <end position="231"/>
    </location>
</feature>
<feature type="compositionally biased region" description="Polar residues" evidence="3">
    <location>
        <begin position="468"/>
        <end position="482"/>
    </location>
</feature>
<feature type="compositionally biased region" description="Low complexity" evidence="3">
    <location>
        <begin position="492"/>
        <end position="508"/>
    </location>
</feature>
<feature type="compositionally biased region" description="Low complexity" evidence="3">
    <location>
        <begin position="536"/>
        <end position="546"/>
    </location>
</feature>
<feature type="compositionally biased region" description="Low complexity" evidence="3">
    <location>
        <begin position="692"/>
        <end position="706"/>
    </location>
</feature>
<feature type="compositionally biased region" description="Polar residues" evidence="3">
    <location>
        <begin position="718"/>
        <end position="732"/>
    </location>
</feature>
<feature type="compositionally biased region" description="Low complexity" evidence="3">
    <location>
        <begin position="771"/>
        <end position="804"/>
    </location>
</feature>
<feature type="compositionally biased region" description="Low complexity" evidence="3">
    <location>
        <begin position="930"/>
        <end position="942"/>
    </location>
</feature>
<feature type="compositionally biased region" description="Low complexity" evidence="3">
    <location>
        <begin position="985"/>
        <end position="1021"/>
    </location>
</feature>
<feature type="compositionally biased region" description="Polar residues" evidence="3">
    <location>
        <begin position="1040"/>
        <end position="1054"/>
    </location>
</feature>
<feature type="compositionally biased region" description="Low complexity" evidence="3">
    <location>
        <begin position="1076"/>
        <end position="1085"/>
    </location>
</feature>
<feature type="compositionally biased region" description="Polar residues" evidence="3">
    <location>
        <begin position="1086"/>
        <end position="1097"/>
    </location>
</feature>
<feature type="compositionally biased region" description="Low complexity" evidence="3">
    <location>
        <begin position="1141"/>
        <end position="1153"/>
    </location>
</feature>
<feature type="compositionally biased region" description="Low complexity" evidence="3">
    <location>
        <begin position="1248"/>
        <end position="1263"/>
    </location>
</feature>
<feature type="compositionally biased region" description="Low complexity" evidence="3">
    <location>
        <begin position="1299"/>
        <end position="1312"/>
    </location>
</feature>
<feature type="compositionally biased region" description="Pro residues" evidence="3">
    <location>
        <begin position="1337"/>
        <end position="1349"/>
    </location>
</feature>
<feature type="compositionally biased region" description="Acidic residues" evidence="3">
    <location>
        <begin position="1979"/>
        <end position="1989"/>
    </location>
</feature>
<feature type="compositionally biased region" description="Low complexity" evidence="3">
    <location>
        <begin position="1993"/>
        <end position="2015"/>
    </location>
</feature>
<feature type="compositionally biased region" description="Low complexity" evidence="3">
    <location>
        <begin position="2029"/>
        <end position="2059"/>
    </location>
</feature>
<feature type="compositionally biased region" description="Polar residues" evidence="3">
    <location>
        <begin position="2069"/>
        <end position="2086"/>
    </location>
</feature>
<feature type="compositionally biased region" description="Low complexity" evidence="3">
    <location>
        <begin position="2212"/>
        <end position="2229"/>
    </location>
</feature>
<feature type="compositionally biased region" description="Polar residues" evidence="3">
    <location>
        <begin position="2263"/>
        <end position="2275"/>
    </location>
</feature>
<feature type="compositionally biased region" description="Low complexity" evidence="3">
    <location>
        <begin position="2276"/>
        <end position="2285"/>
    </location>
</feature>
<feature type="compositionally biased region" description="Gly residues" evidence="3">
    <location>
        <begin position="2290"/>
        <end position="2304"/>
    </location>
</feature>
<feature type="compositionally biased region" description="Pro residues" evidence="3">
    <location>
        <begin position="2426"/>
        <end position="2437"/>
    </location>
</feature>
<feature type="compositionally biased region" description="Polar residues" evidence="3">
    <location>
        <begin position="2540"/>
        <end position="2562"/>
    </location>
</feature>
<feature type="compositionally biased region" description="Low complexity" evidence="3">
    <location>
        <begin position="2570"/>
        <end position="2594"/>
    </location>
</feature>
<feature type="compositionally biased region" description="Polar residues" evidence="3">
    <location>
        <begin position="2732"/>
        <end position="2742"/>
    </location>
</feature>
<feature type="compositionally biased region" description="Basic and acidic residues" evidence="3">
    <location>
        <begin position="2750"/>
        <end position="2768"/>
    </location>
</feature>
<feature type="compositionally biased region" description="Low complexity" evidence="3">
    <location>
        <begin position="2772"/>
        <end position="2785"/>
    </location>
</feature>
<feature type="compositionally biased region" description="Low complexity" evidence="3">
    <location>
        <begin position="2798"/>
        <end position="2821"/>
    </location>
</feature>
<feature type="compositionally biased region" description="Pro residues" evidence="3">
    <location>
        <begin position="2822"/>
        <end position="2849"/>
    </location>
</feature>
<feature type="compositionally biased region" description="Low complexity" evidence="3">
    <location>
        <begin position="2850"/>
        <end position="2860"/>
    </location>
</feature>
<feature type="binding site" evidence="2">
    <location>
        <position position="598"/>
    </location>
    <ligand>
        <name>Zn(2+)</name>
        <dbReference type="ChEBI" id="CHEBI:29105"/>
        <label>1</label>
    </ligand>
</feature>
<feature type="binding site" evidence="2">
    <location>
        <position position="601"/>
    </location>
    <ligand>
        <name>Zn(2+)</name>
        <dbReference type="ChEBI" id="CHEBI:29105"/>
        <label>1</label>
    </ligand>
</feature>
<feature type="binding site" evidence="2">
    <location>
        <position position="604"/>
    </location>
    <ligand>
        <name>Zn(2+)</name>
        <dbReference type="ChEBI" id="CHEBI:29105"/>
        <label>1</label>
    </ligand>
</feature>
<feature type="binding site" evidence="2">
    <location>
        <position position="610"/>
    </location>
    <ligand>
        <name>Zn(2+)</name>
        <dbReference type="ChEBI" id="CHEBI:29105"/>
        <label>2</label>
    </ligand>
</feature>
<feature type="binding site" evidence="2">
    <location>
        <position position="613"/>
    </location>
    <ligand>
        <name>Zn(2+)</name>
        <dbReference type="ChEBI" id="CHEBI:29105"/>
        <label>2</label>
    </ligand>
</feature>
<feature type="binding site" evidence="2">
    <location>
        <position position="616"/>
    </location>
    <ligand>
        <name>Zn(2+)</name>
        <dbReference type="ChEBI" id="CHEBI:29105"/>
        <label>2</label>
    </ligand>
</feature>
<feature type="binding site" evidence="2">
    <location>
        <position position="625"/>
    </location>
    <ligand>
        <name>Zn(2+)</name>
        <dbReference type="ChEBI" id="CHEBI:29105"/>
        <label>2</label>
    </ligand>
</feature>
<feature type="binding site" evidence="2">
    <location>
        <position position="630"/>
    </location>
    <ligand>
        <name>Zn(2+)</name>
        <dbReference type="ChEBI" id="CHEBI:29105"/>
        <label>1</label>
    </ligand>
</feature>
<feature type="binding site" evidence="1">
    <location>
        <position position="1638"/>
    </location>
    <ligand>
        <name>Zn(2+)</name>
        <dbReference type="ChEBI" id="CHEBI:29105"/>
        <label>3</label>
    </ligand>
</feature>
<feature type="binding site" evidence="1">
    <location>
        <position position="1640"/>
    </location>
    <ligand>
        <name>Zn(2+)</name>
        <dbReference type="ChEBI" id="CHEBI:29105"/>
        <label>3</label>
    </ligand>
</feature>
<feature type="binding site" evidence="1">
    <location>
        <position position="1699"/>
    </location>
    <ligand>
        <name>Zn(2+)</name>
        <dbReference type="ChEBI" id="CHEBI:29105"/>
        <label>4</label>
    </ligand>
</feature>
<feature type="binding site" evidence="1">
    <location>
        <position position="1725"/>
    </location>
    <ligand>
        <name>Zn(2+)</name>
        <dbReference type="ChEBI" id="CHEBI:29105"/>
        <label>1</label>
    </ligand>
</feature>
<feature type="binding site" evidence="1">
    <location>
        <position position="1727"/>
    </location>
    <ligand>
        <name>Zn(2+)</name>
        <dbReference type="ChEBI" id="CHEBI:29105"/>
        <label>3</label>
    </ligand>
</feature>
<feature type="binding site" evidence="1">
    <location>
        <position position="1767"/>
    </location>
    <ligand>
        <name>2-oxoglutarate</name>
        <dbReference type="ChEBI" id="CHEBI:16810"/>
    </ligand>
</feature>
<feature type="binding site" evidence="1">
    <location>
        <position position="1777"/>
    </location>
    <ligand>
        <name>Zn(2+)</name>
        <dbReference type="ChEBI" id="CHEBI:29105"/>
        <label>4</label>
    </ligand>
</feature>
<feature type="binding site" evidence="1">
    <location>
        <position position="1779"/>
    </location>
    <ligand>
        <name>Zn(2+)</name>
        <dbReference type="ChEBI" id="CHEBI:29105"/>
        <label>4</label>
    </ligand>
</feature>
<feature type="binding site" evidence="1">
    <location>
        <position position="1795"/>
    </location>
    <ligand>
        <name>Zn(2+)</name>
        <dbReference type="ChEBI" id="CHEBI:29105"/>
        <label>3</label>
    </ligand>
</feature>
<feature type="binding site" evidence="1">
    <location>
        <position position="1804"/>
    </location>
    <ligand>
        <name>Zn(2+)</name>
        <dbReference type="ChEBI" id="CHEBI:29105"/>
        <label>3</label>
    </ligand>
</feature>
<feature type="binding site" evidence="1">
    <location>
        <position position="1862"/>
    </location>
    <ligand>
        <name>Zn(2+)</name>
        <dbReference type="ChEBI" id="CHEBI:29105"/>
        <label>3</label>
    </ligand>
</feature>
<feature type="binding site" evidence="1">
    <location>
        <position position="1878"/>
    </location>
    <ligand>
        <name>2-oxoglutarate</name>
        <dbReference type="ChEBI" id="CHEBI:16810"/>
    </ligand>
</feature>
<feature type="binding site" evidence="1">
    <location>
        <position position="1884"/>
    </location>
    <ligand>
        <name>Zn(2+)</name>
        <dbReference type="ChEBI" id="CHEBI:29105"/>
        <label>2</label>
    </ligand>
</feature>
<feature type="binding site" evidence="1">
    <location>
        <position position="1886"/>
    </location>
    <ligand>
        <name>Fe cation</name>
        <dbReference type="ChEBI" id="CHEBI:24875"/>
        <note>catalytic</note>
    </ligand>
</feature>
<feature type="binding site" evidence="1">
    <location>
        <position position="1888"/>
    </location>
    <ligand>
        <name>Fe cation</name>
        <dbReference type="ChEBI" id="CHEBI:24875"/>
        <note>catalytic</note>
    </ligand>
</feature>
<feature type="binding site" evidence="1">
    <location>
        <position position="1891"/>
    </location>
    <ligand>
        <name>substrate</name>
    </ligand>
</feature>
<feature type="binding site" evidence="1">
    <location>
        <position position="1919"/>
    </location>
    <ligand>
        <name>2-oxoglutarate</name>
        <dbReference type="ChEBI" id="CHEBI:16810"/>
    </ligand>
</feature>
<feature type="binding site" evidence="1">
    <location>
        <position position="2642"/>
    </location>
    <ligand>
        <name>Fe cation</name>
        <dbReference type="ChEBI" id="CHEBI:24875"/>
        <note>catalytic</note>
    </ligand>
</feature>
<feature type="binding site" evidence="1">
    <location>
        <begin position="2657"/>
        <end position="2659"/>
    </location>
    <ligand>
        <name>2-oxoglutarate</name>
        <dbReference type="ChEBI" id="CHEBI:16810"/>
    </ligand>
</feature>
<feature type="binding site" evidence="1">
    <location>
        <begin position="2663"/>
        <end position="2665"/>
    </location>
    <ligand>
        <name>substrate</name>
    </ligand>
</feature>
<feature type="binding site" evidence="1">
    <location>
        <position position="2673"/>
    </location>
    <ligand>
        <name>Zn(2+)</name>
        <dbReference type="ChEBI" id="CHEBI:29105"/>
        <label>3</label>
    </ligand>
</feature>
<feature type="splice variant" id="VSP_057821" description="In isoform C." evidence="7">
    <location>
        <begin position="1"/>
        <end position="804"/>
    </location>
</feature>
<feature type="splice variant" id="VSP_057822" description="In isoform B and isoform F." evidence="7">
    <original>K</original>
    <variation>KQDYGRRHHLPPPTLNHPPMTLPPPTITITPTTHNHNHQNHNHNHSNDNNSSSCSLF</variation>
    <location>
        <position position="589"/>
    </location>
</feature>
<feature type="splice variant" id="VSP_057823" description="In isoform E and isoform F." evidence="7">
    <original>K</original>
    <variation>KEPKAKT</variation>
    <location>
        <position position="637"/>
    </location>
</feature>
<feature type="splice variant" id="VSP_057824" description="In isoform B and isoform F." evidence="7">
    <location>
        <position position="684"/>
    </location>
</feature>
<feature type="mutagenesis site" description="In DMAD(Del-CXXC); flies are viable and fertile." evidence="4">
    <location>
        <begin position="598"/>
        <end position="601"/>
    </location>
</feature>
<feature type="mutagenesis site" description="In DMAD-CD(mut); abolishes ability to demethylate m6A DNA." evidence="4 5">
    <original>HRD</original>
    <variation>YRA</variation>
    <location>
        <begin position="1886"/>
        <end position="1888"/>
    </location>
</feature>
<feature type="sequence conflict" description="In Ref. 3; AAL39925." evidence="7" ref="3">
    <original>P</original>
    <variation>T</variation>
    <location>
        <position position="2196"/>
    </location>
</feature>
<feature type="sequence conflict" description="In Ref. 3; AAL39925." evidence="7" ref="3">
    <original>A</original>
    <variation>T</variation>
    <location>
        <position position="2218"/>
    </location>
</feature>
<feature type="sequence conflict" description="In Ref. 3; AAL39925." evidence="7" ref="3">
    <location>
        <begin position="2240"/>
        <end position="2243"/>
    </location>
</feature>
<feature type="sequence conflict" description="In Ref. 3; AAL39925." evidence="7" ref="3">
    <original>S</original>
    <variation>A</variation>
    <location>
        <position position="2468"/>
    </location>
</feature>
<feature type="sequence conflict" description="In Ref. 3; AAL39925." evidence="7" ref="3">
    <location>
        <begin position="2500"/>
        <end position="2502"/>
    </location>
</feature>
<feature type="sequence conflict" description="In Ref. 3; AAL39925." evidence="7" ref="3">
    <original>L</original>
    <variation>Q</variation>
    <location>
        <position position="2527"/>
    </location>
</feature>
<evidence type="ECO:0000250" key="1">
    <source>
        <dbReference type="UniProtKB" id="Q6N021"/>
    </source>
</evidence>
<evidence type="ECO:0000255" key="2">
    <source>
        <dbReference type="PROSITE-ProRule" id="PRU00509"/>
    </source>
</evidence>
<evidence type="ECO:0000256" key="3">
    <source>
        <dbReference type="SAM" id="MobiDB-lite"/>
    </source>
</evidence>
<evidence type="ECO:0000269" key="4">
    <source>
    </source>
</evidence>
<evidence type="ECO:0000269" key="5">
    <source>
    </source>
</evidence>
<evidence type="ECO:0000303" key="6">
    <source>
    </source>
</evidence>
<evidence type="ECO:0000305" key="7"/>
<evidence type="ECO:0000305" key="8">
    <source>
    </source>
</evidence>
<evidence type="ECO:0000312" key="9">
    <source>
        <dbReference type="FlyBase" id="FBgn0263392"/>
    </source>
</evidence>
<keyword id="KW-0025">Alternative splicing</keyword>
<keyword id="KW-0158">Chromosome</keyword>
<keyword id="KW-0223">Dioxygenase</keyword>
<keyword id="KW-0408">Iron</keyword>
<keyword id="KW-0479">Metal-binding</keyword>
<keyword id="KW-0560">Oxidoreductase</keyword>
<keyword id="KW-1185">Reference proteome</keyword>
<keyword id="KW-0862">Zinc</keyword>
<keyword id="KW-0863">Zinc-finger</keyword>
<name>TET_DROME</name>
<comment type="function">
    <text evidence="4 5">Dioxygenase that specifically demethylates DNA methylated on the 6th position of adenine (N(6)-methyladenosine) DNA (PubMed:25936838, PubMed:30078725). N(6)-methyladenosine (m6A) DNA is present at a relatively high level at the very earliest embryonic stages but at low levels at the late embryonic stages and may act as a regulator of gene expression (PubMed:25936838). Promotes differentiation of early germ cells in ovary (PubMed:25936838). Contributes to neuronal morphology, development, and function in the brain (PubMed:30078725). By interacting with histone modifier wds, binds to a specific set of genes, modulates intragenic (N(6)-methyladenosine) DNA levels and thereby maintains transcriptional activation (PubMed:30078725). Also able to catalyze the conversion of the modified genomic base 5-methylcytosine (5mC) into 5-hydroxymethylcytosine (5hmC) (PubMed:25936838).</text>
</comment>
<comment type="catalytic activity">
    <reaction evidence="5 8">
        <text>an N(6)-methyl-2'-deoxyadenosine in DNA + 2-oxoglutarate + O2 = a 2'-deoxyadenosine in DNA + formaldehyde + succinate + CO2</text>
        <dbReference type="Rhea" id="RHEA:49524"/>
        <dbReference type="Rhea" id="RHEA-COMP:12418"/>
        <dbReference type="Rhea" id="RHEA-COMP:12419"/>
        <dbReference type="ChEBI" id="CHEBI:15379"/>
        <dbReference type="ChEBI" id="CHEBI:16526"/>
        <dbReference type="ChEBI" id="CHEBI:16810"/>
        <dbReference type="ChEBI" id="CHEBI:16842"/>
        <dbReference type="ChEBI" id="CHEBI:30031"/>
        <dbReference type="ChEBI" id="CHEBI:90615"/>
        <dbReference type="ChEBI" id="CHEBI:90616"/>
        <dbReference type="EC" id="1.14.11.51"/>
    </reaction>
</comment>
<comment type="catalytic activity">
    <reaction evidence="8">
        <text>a 5-methyl-2'-deoxycytidine in DNA + 2-oxoglutarate + O2 = a 5-hydroxymethyl-2'-deoxycytidine in DNA + succinate + CO2</text>
        <dbReference type="Rhea" id="RHEA:52636"/>
        <dbReference type="Rhea" id="RHEA-COMP:11370"/>
        <dbReference type="Rhea" id="RHEA-COMP:13315"/>
        <dbReference type="ChEBI" id="CHEBI:15379"/>
        <dbReference type="ChEBI" id="CHEBI:16526"/>
        <dbReference type="ChEBI" id="CHEBI:16810"/>
        <dbReference type="ChEBI" id="CHEBI:30031"/>
        <dbReference type="ChEBI" id="CHEBI:85454"/>
        <dbReference type="ChEBI" id="CHEBI:136731"/>
        <dbReference type="EC" id="1.14.11.80"/>
    </reaction>
</comment>
<comment type="catalytic activity">
    <reaction evidence="8">
        <text>a 5-hydroxymethyl-2'-deoxycytidine in DNA + 2-oxoglutarate + O2 = a 5-formyl-2'-deoxycytidine in DNA + succinate + CO2 + H2O</text>
        <dbReference type="Rhea" id="RHEA:53828"/>
        <dbReference type="Rhea" id="RHEA-COMP:13315"/>
        <dbReference type="Rhea" id="RHEA-COMP:13656"/>
        <dbReference type="ChEBI" id="CHEBI:15377"/>
        <dbReference type="ChEBI" id="CHEBI:15379"/>
        <dbReference type="ChEBI" id="CHEBI:16526"/>
        <dbReference type="ChEBI" id="CHEBI:16810"/>
        <dbReference type="ChEBI" id="CHEBI:30031"/>
        <dbReference type="ChEBI" id="CHEBI:136731"/>
        <dbReference type="ChEBI" id="CHEBI:137731"/>
        <dbReference type="EC" id="1.14.11.80"/>
    </reaction>
</comment>
<comment type="catalytic activity">
    <reaction evidence="8">
        <text>a 5-formyl-2'-deoxycytidine in DNA + 2-oxoglutarate + O2 = a 5-carboxyl-2'-deoxycytidine in DNA + succinate + CO2 + H(+)</text>
        <dbReference type="Rhea" id="RHEA:53832"/>
        <dbReference type="Rhea" id="RHEA-COMP:13656"/>
        <dbReference type="Rhea" id="RHEA-COMP:13657"/>
        <dbReference type="ChEBI" id="CHEBI:15378"/>
        <dbReference type="ChEBI" id="CHEBI:15379"/>
        <dbReference type="ChEBI" id="CHEBI:16526"/>
        <dbReference type="ChEBI" id="CHEBI:16810"/>
        <dbReference type="ChEBI" id="CHEBI:30031"/>
        <dbReference type="ChEBI" id="CHEBI:137731"/>
        <dbReference type="ChEBI" id="CHEBI:137732"/>
        <dbReference type="EC" id="1.14.11.80"/>
    </reaction>
</comment>
<comment type="cofactor">
    <cofactor evidence="1">
        <name>Fe(2+)</name>
        <dbReference type="ChEBI" id="CHEBI:29033"/>
    </cofactor>
    <text evidence="1">Binds 1 Fe(2+) ion per subunit.</text>
</comment>
<comment type="cofactor">
    <cofactor evidence="1">
        <name>Zn(2+)</name>
        <dbReference type="ChEBI" id="CHEBI:29105"/>
    </cofactor>
    <text evidence="1">Binds 3 zinc ions per subunit. The zinc ions have a structural role.</text>
</comment>
<comment type="subunit">
    <text evidence="5">Interacts (via C-terminus) with wds (via WD repeats).</text>
</comment>
<comment type="subcellular location">
    <subcellularLocation>
        <location evidence="5">Chromosome</location>
    </subcellularLocation>
</comment>
<comment type="alternative products">
    <event type="alternative splicing"/>
    <isoform>
        <id>M9NEY8-1</id>
        <name>A</name>
        <sequence type="displayed"/>
    </isoform>
    <isoform>
        <id>M9NEY8-2</id>
        <name>C</name>
        <name>D</name>
        <sequence type="described" ref="VSP_057821"/>
    </isoform>
    <isoform>
        <id>M9NEY8-3</id>
        <name>E</name>
        <sequence type="described" ref="VSP_057823"/>
    </isoform>
    <isoform>
        <id>M9NEY8-4</id>
        <name>B</name>
        <sequence type="described" ref="VSP_057822 VSP_057824"/>
    </isoform>
    <isoform>
        <id>M9NEY8-5</id>
        <name>F</name>
        <sequence type="described" ref="VSP_057822 VSP_057823 VSP_057824"/>
    </isoform>
</comment>
<comment type="tissue specificity">
    <text evidence="5">Expressed in brain (at protein level).</text>
</comment>
<comment type="developmental stage">
    <text evidence="4">Weakly expressed during early embryonic stages but is highly expressed during the later embryonic stages.</text>
</comment>
<comment type="disruption phenotype">
    <text evidence="4 5">Lethality at the pupa stage. A small population of mutant animals are however able to pass through the pupa stage but die within 3 days post-eclosion. Strong developmental defects and significantly increases the abundance of N(6)-methyladenosine (m6A) modification in DNA. RNAi-mediated knockdown results in mushroom bodies abnormalities, including beta-lobes which erroneously cross the midline, missing or misdirected alpha- and beta-lobes, as well as truncated or overbranched lobes (PubMed:30078725). RNAi-mediated knockdown in neurons results in mushroom body abnormalities in adult flies (PubMed:30078725). Simultaneous RNAi-mediated knockdown of Tet and wds results in enhanced mushroom body alpha lobe development defects compared to the single Tet knockdown (PubMed:30078725).</text>
</comment>
<comment type="similarity">
    <text evidence="7">Belongs to the TET family.</text>
</comment>
<comment type="sequence caution" evidence="7">
    <conflict type="erroneous initiation">
        <sequence resource="EMBL-CDS" id="AAL39446"/>
    </conflict>
    <text>Truncated N-terminus.</text>
</comment>
<comment type="sequence caution" evidence="7">
    <conflict type="erroneous initiation">
        <sequence resource="EMBL-CDS" id="AAL39925"/>
    </conflict>
    <text>Truncated N-terminus.</text>
</comment>
<gene>
    <name evidence="9" type="primary">Tet</name>
    <name evidence="6" type="synonym">DMAD</name>
    <name evidence="9" type="ORF">CG2083</name>
    <name evidence="9" type="ORF">CG43444</name>
    <name evidence="9" type="ORF">CG9973</name>
</gene>
<dbReference type="EC" id="1.14.11.80" evidence="8"/>
<dbReference type="EC" id="1.14.11.51" evidence="5 8"/>
<dbReference type="EMBL" id="AE014296">
    <property type="protein sequence ID" value="AAF47691.4"/>
    <property type="molecule type" value="Genomic_DNA"/>
</dbReference>
<dbReference type="EMBL" id="AE014296">
    <property type="protein sequence ID" value="AFH04252.1"/>
    <property type="molecule type" value="Genomic_DNA"/>
</dbReference>
<dbReference type="EMBL" id="AE014296">
    <property type="protein sequence ID" value="AFH04253.1"/>
    <property type="molecule type" value="Genomic_DNA"/>
</dbReference>
<dbReference type="EMBL" id="AE014296">
    <property type="protein sequence ID" value="AFH04254.1"/>
    <property type="molecule type" value="Genomic_DNA"/>
</dbReference>
<dbReference type="EMBL" id="AE014296">
    <property type="protein sequence ID" value="AGB94038.1"/>
    <property type="molecule type" value="Genomic_DNA"/>
</dbReference>
<dbReference type="EMBL" id="AE014296">
    <property type="protein sequence ID" value="AGB94039.1"/>
    <property type="molecule type" value="Genomic_DNA"/>
</dbReference>
<dbReference type="EMBL" id="AY069301">
    <property type="protein sequence ID" value="AAL39446.1"/>
    <property type="status" value="ALT_INIT"/>
    <property type="molecule type" value="mRNA"/>
</dbReference>
<dbReference type="EMBL" id="AY069780">
    <property type="protein sequence ID" value="AAL39925.1"/>
    <property type="status" value="ALT_INIT"/>
    <property type="molecule type" value="mRNA"/>
</dbReference>
<dbReference type="RefSeq" id="NP_001246581.1">
    <molecule id="M9NEY8-1"/>
    <property type="nucleotide sequence ID" value="NM_001259652.2"/>
</dbReference>
<dbReference type="RefSeq" id="NP_001246582.1">
    <molecule id="M9NEY8-4"/>
    <property type="nucleotide sequence ID" value="NM_001259653.1"/>
</dbReference>
<dbReference type="RefSeq" id="NP_001246583.1">
    <molecule id="M9NEY8-2"/>
    <property type="nucleotide sequence ID" value="NM_001259654.2"/>
</dbReference>
<dbReference type="RefSeq" id="NP_001261343.1">
    <molecule id="M9NEY8-3"/>
    <property type="nucleotide sequence ID" value="NM_001274414.2"/>
</dbReference>
<dbReference type="RefSeq" id="NP_001261344.1">
    <molecule id="M9NEY8-5"/>
    <property type="nucleotide sequence ID" value="NM_001274415.1"/>
</dbReference>
<dbReference type="RefSeq" id="NP_647750.4">
    <molecule id="M9NEY8-2"/>
    <property type="nucleotide sequence ID" value="NM_139493.4"/>
</dbReference>
<dbReference type="SMR" id="M9NEY8"/>
<dbReference type="FunCoup" id="M9NEY8">
    <property type="interactions" value="291"/>
</dbReference>
<dbReference type="IntAct" id="M9NEY8">
    <property type="interactions" value="30"/>
</dbReference>
<dbReference type="STRING" id="7227.FBpp0306013"/>
<dbReference type="GlyGen" id="M9NEY8">
    <property type="glycosylation" value="9 sites"/>
</dbReference>
<dbReference type="PaxDb" id="7227-FBpp0306013"/>
<dbReference type="EnsemblMetazoa" id="FBtr0309117">
    <molecule id="M9NEY8-1"/>
    <property type="protein sequence ID" value="FBpp0301125"/>
    <property type="gene ID" value="FBgn0263392"/>
</dbReference>
<dbReference type="EnsemblMetazoa" id="FBtr0309118">
    <molecule id="M9NEY8-4"/>
    <property type="protein sequence ID" value="FBpp0301126"/>
    <property type="gene ID" value="FBgn0263392"/>
</dbReference>
<dbReference type="EnsemblMetazoa" id="FBtr0309119">
    <molecule id="M9NEY8-2"/>
    <property type="protein sequence ID" value="FBpp0301127"/>
    <property type="gene ID" value="FBgn0263392"/>
</dbReference>
<dbReference type="EnsemblMetazoa" id="FBtr0309120">
    <molecule id="M9NEY8-2"/>
    <property type="protein sequence ID" value="FBpp0301128"/>
    <property type="gene ID" value="FBgn0263392"/>
</dbReference>
<dbReference type="EnsemblMetazoa" id="FBtr0333880">
    <molecule id="M9NEY8-3"/>
    <property type="protein sequence ID" value="FBpp0306012"/>
    <property type="gene ID" value="FBgn0263392"/>
</dbReference>
<dbReference type="EnsemblMetazoa" id="FBtr0333881">
    <molecule id="M9NEY8-5"/>
    <property type="protein sequence ID" value="FBpp0306013"/>
    <property type="gene ID" value="FBgn0263392"/>
</dbReference>
<dbReference type="GeneID" id="38347"/>
<dbReference type="KEGG" id="dme:Dmel_CG43444"/>
<dbReference type="UCSC" id="CG2083-RB">
    <property type="organism name" value="d. melanogaster"/>
</dbReference>
<dbReference type="AGR" id="FB:FBgn0263392"/>
<dbReference type="CTD" id="38347"/>
<dbReference type="FlyBase" id="FBgn0263392">
    <property type="gene designation" value="Tet"/>
</dbReference>
<dbReference type="VEuPathDB" id="VectorBase:FBgn0263392"/>
<dbReference type="eggNOG" id="ENOG502QURD">
    <property type="taxonomic scope" value="Eukaryota"/>
</dbReference>
<dbReference type="InParanoid" id="M9NEY8"/>
<dbReference type="OMA" id="PNWNVYG"/>
<dbReference type="OrthoDB" id="8854879at2759"/>
<dbReference type="BioGRID-ORCS" id="38347">
    <property type="hits" value="0 hits in 3 CRISPR screens"/>
</dbReference>
<dbReference type="ChiTaRS" id="Tet">
    <property type="organism name" value="fly"/>
</dbReference>
<dbReference type="GenomeRNAi" id="38347"/>
<dbReference type="PRO" id="PR:M9NEY8"/>
<dbReference type="Proteomes" id="UP000000803">
    <property type="component" value="Chromosome 3L"/>
</dbReference>
<dbReference type="Bgee" id="FBgn0263392">
    <property type="expression patterns" value="Expressed in adult Malpighian tubule tiny cell (Drosophila) in Malpighian tubule and 295 other cell types or tissues"/>
</dbReference>
<dbReference type="GO" id="GO:0005694">
    <property type="term" value="C:chromosome"/>
    <property type="evidence" value="ECO:0007669"/>
    <property type="project" value="UniProtKB-SubCell"/>
</dbReference>
<dbReference type="GO" id="GO:0005634">
    <property type="term" value="C:nucleus"/>
    <property type="evidence" value="ECO:0000315"/>
    <property type="project" value="FlyBase"/>
</dbReference>
<dbReference type="GO" id="GO:0070579">
    <property type="term" value="F:5-methylcytosine dioxygenase activity"/>
    <property type="evidence" value="ECO:0000318"/>
    <property type="project" value="GO_Central"/>
</dbReference>
<dbReference type="GO" id="GO:0003677">
    <property type="term" value="F:DNA binding"/>
    <property type="evidence" value="ECO:0007669"/>
    <property type="project" value="InterPro"/>
</dbReference>
<dbReference type="GO" id="GO:0141131">
    <property type="term" value="F:DNA N6-methyladenine demethylase activity"/>
    <property type="evidence" value="ECO:0000314"/>
    <property type="project" value="FlyBase"/>
</dbReference>
<dbReference type="GO" id="GO:0008270">
    <property type="term" value="F:zinc ion binding"/>
    <property type="evidence" value="ECO:0007669"/>
    <property type="project" value="UniProtKB-KW"/>
</dbReference>
<dbReference type="GO" id="GO:0141167">
    <property type="term" value="P:chromosomal 5-methylcytosine DNA demethylation, oxidation pathway"/>
    <property type="evidence" value="ECO:0007669"/>
    <property type="project" value="InterPro"/>
</dbReference>
<dbReference type="GO" id="GO:0006304">
    <property type="term" value="P:DNA modification"/>
    <property type="evidence" value="ECO:0000315"/>
    <property type="project" value="FlyBase"/>
</dbReference>
<dbReference type="GO" id="GO:0007281">
    <property type="term" value="P:germ cell development"/>
    <property type="evidence" value="ECO:0000315"/>
    <property type="project" value="UniProtKB"/>
</dbReference>
<dbReference type="GO" id="GO:0045944">
    <property type="term" value="P:positive regulation of transcription by RNA polymerase II"/>
    <property type="evidence" value="ECO:0000318"/>
    <property type="project" value="GO_Central"/>
</dbReference>
<dbReference type="GO" id="GO:0009451">
    <property type="term" value="P:RNA modification"/>
    <property type="evidence" value="ECO:0000315"/>
    <property type="project" value="FlyBase"/>
</dbReference>
<dbReference type="GO" id="GO:0010526">
    <property type="term" value="P:transposable element silencing"/>
    <property type="evidence" value="ECO:0000315"/>
    <property type="project" value="FlyBase"/>
</dbReference>
<dbReference type="CDD" id="cd18892">
    <property type="entry name" value="TET"/>
    <property type="match status" value="1"/>
</dbReference>
<dbReference type="InterPro" id="IPR024779">
    <property type="entry name" value="2OGFeDO_JBP1/TET_oxygenase_dom"/>
</dbReference>
<dbReference type="InterPro" id="IPR040175">
    <property type="entry name" value="TET1/2/3"/>
</dbReference>
<dbReference type="InterPro" id="IPR046942">
    <property type="entry name" value="TET_oxygenase"/>
</dbReference>
<dbReference type="InterPro" id="IPR002857">
    <property type="entry name" value="Znf_CXXC"/>
</dbReference>
<dbReference type="PANTHER" id="PTHR23358">
    <property type="entry name" value="METHYLCYTOSINE DIOXYGENASE TET"/>
    <property type="match status" value="1"/>
</dbReference>
<dbReference type="PANTHER" id="PTHR23358:SF6">
    <property type="entry name" value="METHYLCYTOSINE DIOXYGENASE TET"/>
    <property type="match status" value="1"/>
</dbReference>
<dbReference type="Pfam" id="PF12851">
    <property type="entry name" value="Tet_JBP"/>
    <property type="match status" value="1"/>
</dbReference>
<dbReference type="SMART" id="SM01333">
    <property type="entry name" value="Tet_JBP"/>
    <property type="match status" value="1"/>
</dbReference>
<dbReference type="PROSITE" id="PS51058">
    <property type="entry name" value="ZF_CXXC"/>
    <property type="match status" value="1"/>
</dbReference>
<accession>M9NEY8</accession>
<accession>M9NDF7</accession>
<accession>M9PDW4</accession>
<accession>M9PEE3</accession>
<accession>Q8T0I1</accession>
<accession>Q8T9G4</accession>
<accession>Q9VZX4</accession>
<organism>
    <name type="scientific">Drosophila melanogaster</name>
    <name type="common">Fruit fly</name>
    <dbReference type="NCBI Taxonomy" id="7227"/>
    <lineage>
        <taxon>Eukaryota</taxon>
        <taxon>Metazoa</taxon>
        <taxon>Ecdysozoa</taxon>
        <taxon>Arthropoda</taxon>
        <taxon>Hexapoda</taxon>
        <taxon>Insecta</taxon>
        <taxon>Pterygota</taxon>
        <taxon>Neoptera</taxon>
        <taxon>Endopterygota</taxon>
        <taxon>Diptera</taxon>
        <taxon>Brachycera</taxon>
        <taxon>Muscomorpha</taxon>
        <taxon>Ephydroidea</taxon>
        <taxon>Drosophilidae</taxon>
        <taxon>Drosophila</taxon>
        <taxon>Sophophora</taxon>
    </lineage>
</organism>
<protein>
    <recommendedName>
        <fullName>Methylcytosine dioxygenase TET</fullName>
        <ecNumber evidence="8">1.14.11.80</ecNumber>
    </recommendedName>
    <alternativeName>
        <fullName evidence="6">DNA 6mA demethylase</fullName>
    </alternativeName>
    <alternativeName>
        <fullName evidence="7">DNA N6-methyl adenine demethylase</fullName>
        <ecNumber evidence="5 8">1.14.11.51</ecNumber>
    </alternativeName>
</protein>
<sequence>MASSILAQSSTGATVDSSNLGATAAAATSVEATVSSLHNTHLNQLSSLSQHYTTPYHHPHSHSHPHHHYQQHYPQQQHLQQQQQQQHHAQQQHQQQQQQQQQQQQQHWDYYARQQQQHQQQQQQQQQPAAATGNTNGNSSNNGNNGNNGNNSNPDGSNTTVPAPLGSSNNSSSNHANAASGGNSGQRHGDANANAISAASAAVGNPGNQQPNNSAGNANSNSNSNSNSNGSYTRPWEMESKDNGPQPPQTQPHLQLKSGFEPFSKLPSFQSQFHGFNEQLLPDGTPMPVPIGAGVPPGSAAAVAAATGSIPPGSVGPNSVAGPVGPTAMSSLQTVAMSPASISVSSPGMMSVGSPLTQLSSLQTSITPPSAGSFPAPPPPNAFAHHHALNPHHHHRGASGYPTPYAELPLYPGFTPLSVKKEPISGGSDFEMLLKKEDFDLSNSGGAGLIHHPLQHGQPHPIPMGMHTPTSYDGNNSNNSYPQAAGGGSGSHTPHTTTTQPTPTTTTPVKVEKLLQSPIARLEARKKERRKQRPNSLESSAESEASGMDVDPSNPGQVDAVSSTANFKSPLSALGMGDSNDANASGCDKQSKKKRKRCGECVGCQRKDNCGECAPCRNDKSHQICKQRRCEKLTEKKIVFGADGQPVRPDSKRGRGKGKSSGSGNGTVNATGIAAGNGTPTTGQSRARKNSTKANKLNAAAASATSPRLSPVPAATLLPQQSPNTTSATGNLQQQQQQQQQQYQQHQQLLSQQQLLSQQQQQYQQPQQQQQHFQQQQQQHLQQQHAQQQHLPQQQHQITAQIQTMKDQPQQPMAPMAFYPTWQADPSQGWQNQFIQQIPQNTPAITSLNSLDFQTQSYAYPSNGYVQSGLGFDPNYGRSPYAAPVQRYDFQSQQLSTAPSAINQVGLQSVAGFAPSYAGQVSAAPVPPSQQQQQQQQQQQQQHLGADLNKTMSGNDTPGYPRVSSVPPRSLNCNGYSGDYSGSPATNSNSNNNSSSNTSNTNNSNASNNNATTVVSGGTTTPAPPPTVVAQPASSPMQPPNQAVPQSPTRSNMLQQQQQQHQSPTGNGLQPYVAPQQQQQQQQQQHLSSPPMQDWNWQQQQQQQQSLGGEGYAQGERLHLNTRIKSMIMRKSDPKDPPPDLQQQPQQVQQQQQTGHFLSYSHHLRPEAALSANGPSSATPTHPLPNLQQQQQQVQQVQQVQQQQQQQQAVGGQVAAEPIGGGGDHIWKPHHANSFKKPSVVSGYPASQDAQLQLQLQQHQPGQHTTINHSVDPPVVPPQQHPPVAAAQPKKSRSRSKASRAAAAAAAAAEAAAEIDRDRNSTDPGGGGLKPLSAHYPPHPHAAGGPPPGQDYHSQYIKTEPGLLGPPQPNKMEGYERNYQNFIQYADFCQNDGQGQPVQQHHGHGQQDYAGYHHNSAYYGAGASSFQQNFQQNFVPGYQHSTYGARGKPPANQPHQIHGHGQSLMELDRKPDTNSIIPLPTNYEKDIPAYPIPPHRYALGHGAPPHLSHHGMLEPKIEDMGMLGHGGGYAYLGSEGKPLNNGFSCCRQGGTRPPTAEHLKDGTCLGLGIQPKEELIDEDELIDTHGNGLKPIGGVGKAKGKQKPDEIPEIVVKHEKINPMFDTTDRLEKGNKTEIPECECFQSDKNPPEPGTYYTHLGTASSLMDLRREFEERCNLTGRQLRIEKIVYTGKEGKTSQGCPVAKWVIRRADLEEKILVVVKKRPGHRCIAAYIVVCMVAWDGMPRLEADNAYKNLIPKLNKYGLPTTRRCATNENRTCACQGLDPESSGASYSFGCSWSMYYNGCKYARSKTVRKFRLSVKSEEAAIEDHMNLIATLLAPVFKQVCPRSYDNQTKYEHEASDCRLGLEPGKPFSGVTACLDFCAHSHRDLHNMQDGCTVHVALLKPGNRDTRLPDDEQFHVLPLYTMDGTDEFESVEGQRDKHRTGAVQMLDKFPCEVRVRSTPLIPCRRHGKKRKDGDEAAPPDGDQDAVGDANSQSSSSNGAQSQTQANNQQSSPPALGTAHIKKENGNGVNANGASSKSKGKGKSNQSNNSSASTPGSAPPSTPSPRCQTPVTNNPSPAGSAFSTPPVHGSNANPQSNGGQGTGNQPGQLMSSNSSLMNMATMIDTFTDAQLQSNQISSTVLDSPYSYDYQTASYIDSRNYYGQWPTPHAPMGMQAQVGGLGGGGPGGTVAGVPPLTPSTPTAQPQLGVPPATSIAGGTTTGAPTGALPATAPPTATPTQLETSNGYGPGNYQTLVSNPASNLTNPGGVTTEVQQQHQQAQQQSALTGGVGPGGLPVVGGAPGDLKGRLVSEENPDSTTLVNHHHHHHNLTESKLTALTAMQPMTNLAPLTTSHHPQEGFVKPKPPPSDYTAQYTAQYPNNYQMYPPPPPPPHSAYSAYDAYQNMNYNYGYHQAYSPYGMYPQQTPPPTPPPPSPNWNMYGHHQTGSVNSGYGSANPAAGAGSLISSHGSVASAGVGLQKAMVPVPGPLHHQQQQVLQQQQQQQQQQQQQQQQQQQQQQQQVQQLQQEAPQTILPDLSNGQTNSDTVATPTPTGDSSSNDAGPGNPGAGNQAPASGAGAATTAPPIASPGSTNSTKIEPIGEVAEINENIEAFQDPQMGGVAIALNHGSVLIECAKHEMHATTAVRRPDRHHPTRMTLIFYQHRNLNRCRHGIDEWEEKMRVKKINTDLDNKAKEERERLIKKAAGEDMDELDEDALMQDEPVPIKKESSANGQQLKNGASGSKKKKSSDSKKSQANEQSKNEKVALHAPTLTTTSWTTLFPTHPCVVSGKYPEGNSSPTSSTNNAPNGGGCPAQQQQHLPPPPGSGLIHPPPGTPTGTAAPPPLPTPHQQLPQQQQT</sequence>
<proteinExistence type="evidence at protein level"/>
<reference key="1">
    <citation type="journal article" date="2000" name="Science">
        <title>The genome sequence of Drosophila melanogaster.</title>
        <authorList>
            <person name="Adams M.D."/>
            <person name="Celniker S.E."/>
            <person name="Holt R.A."/>
            <person name="Evans C.A."/>
            <person name="Gocayne J.D."/>
            <person name="Amanatides P.G."/>
            <person name="Scherer S.E."/>
            <person name="Li P.W."/>
            <person name="Hoskins R.A."/>
            <person name="Galle R.F."/>
            <person name="George R.A."/>
            <person name="Lewis S.E."/>
            <person name="Richards S."/>
            <person name="Ashburner M."/>
            <person name="Henderson S.N."/>
            <person name="Sutton G.G."/>
            <person name="Wortman J.R."/>
            <person name="Yandell M.D."/>
            <person name="Zhang Q."/>
            <person name="Chen L.X."/>
            <person name="Brandon R.C."/>
            <person name="Rogers Y.-H.C."/>
            <person name="Blazej R.G."/>
            <person name="Champe M."/>
            <person name="Pfeiffer B.D."/>
            <person name="Wan K.H."/>
            <person name="Doyle C."/>
            <person name="Baxter E.G."/>
            <person name="Helt G."/>
            <person name="Nelson C.R."/>
            <person name="Miklos G.L.G."/>
            <person name="Abril J.F."/>
            <person name="Agbayani A."/>
            <person name="An H.-J."/>
            <person name="Andrews-Pfannkoch C."/>
            <person name="Baldwin D."/>
            <person name="Ballew R.M."/>
            <person name="Basu A."/>
            <person name="Baxendale J."/>
            <person name="Bayraktaroglu L."/>
            <person name="Beasley E.M."/>
            <person name="Beeson K.Y."/>
            <person name="Benos P.V."/>
            <person name="Berman B.P."/>
            <person name="Bhandari D."/>
            <person name="Bolshakov S."/>
            <person name="Borkova D."/>
            <person name="Botchan M.R."/>
            <person name="Bouck J."/>
            <person name="Brokstein P."/>
            <person name="Brottier P."/>
            <person name="Burtis K.C."/>
            <person name="Busam D.A."/>
            <person name="Butler H."/>
            <person name="Cadieu E."/>
            <person name="Center A."/>
            <person name="Chandra I."/>
            <person name="Cherry J.M."/>
            <person name="Cawley S."/>
            <person name="Dahlke C."/>
            <person name="Davenport L.B."/>
            <person name="Davies P."/>
            <person name="de Pablos B."/>
            <person name="Delcher A."/>
            <person name="Deng Z."/>
            <person name="Mays A.D."/>
            <person name="Dew I."/>
            <person name="Dietz S.M."/>
            <person name="Dodson K."/>
            <person name="Doup L.E."/>
            <person name="Downes M."/>
            <person name="Dugan-Rocha S."/>
            <person name="Dunkov B.C."/>
            <person name="Dunn P."/>
            <person name="Durbin K.J."/>
            <person name="Evangelista C.C."/>
            <person name="Ferraz C."/>
            <person name="Ferriera S."/>
            <person name="Fleischmann W."/>
            <person name="Fosler C."/>
            <person name="Gabrielian A.E."/>
            <person name="Garg N.S."/>
            <person name="Gelbart W.M."/>
            <person name="Glasser K."/>
            <person name="Glodek A."/>
            <person name="Gong F."/>
            <person name="Gorrell J.H."/>
            <person name="Gu Z."/>
            <person name="Guan P."/>
            <person name="Harris M."/>
            <person name="Harris N.L."/>
            <person name="Harvey D.A."/>
            <person name="Heiman T.J."/>
            <person name="Hernandez J.R."/>
            <person name="Houck J."/>
            <person name="Hostin D."/>
            <person name="Houston K.A."/>
            <person name="Howland T.J."/>
            <person name="Wei M.-H."/>
            <person name="Ibegwam C."/>
            <person name="Jalali M."/>
            <person name="Kalush F."/>
            <person name="Karpen G.H."/>
            <person name="Ke Z."/>
            <person name="Kennison J.A."/>
            <person name="Ketchum K.A."/>
            <person name="Kimmel B.E."/>
            <person name="Kodira C.D."/>
            <person name="Kraft C.L."/>
            <person name="Kravitz S."/>
            <person name="Kulp D."/>
            <person name="Lai Z."/>
            <person name="Lasko P."/>
            <person name="Lei Y."/>
            <person name="Levitsky A.A."/>
            <person name="Li J.H."/>
            <person name="Li Z."/>
            <person name="Liang Y."/>
            <person name="Lin X."/>
            <person name="Liu X."/>
            <person name="Mattei B."/>
            <person name="McIntosh T.C."/>
            <person name="McLeod M.P."/>
            <person name="McPherson D."/>
            <person name="Merkulov G."/>
            <person name="Milshina N.V."/>
            <person name="Mobarry C."/>
            <person name="Morris J."/>
            <person name="Moshrefi A."/>
            <person name="Mount S.M."/>
            <person name="Moy M."/>
            <person name="Murphy B."/>
            <person name="Murphy L."/>
            <person name="Muzny D.M."/>
            <person name="Nelson D.L."/>
            <person name="Nelson D.R."/>
            <person name="Nelson K.A."/>
            <person name="Nixon K."/>
            <person name="Nusskern D.R."/>
            <person name="Pacleb J.M."/>
            <person name="Palazzolo M."/>
            <person name="Pittman G.S."/>
            <person name="Pan S."/>
            <person name="Pollard J."/>
            <person name="Puri V."/>
            <person name="Reese M.G."/>
            <person name="Reinert K."/>
            <person name="Remington K."/>
            <person name="Saunders R.D.C."/>
            <person name="Scheeler F."/>
            <person name="Shen H."/>
            <person name="Shue B.C."/>
            <person name="Siden-Kiamos I."/>
            <person name="Simpson M."/>
            <person name="Skupski M.P."/>
            <person name="Smith T.J."/>
            <person name="Spier E."/>
            <person name="Spradling A.C."/>
            <person name="Stapleton M."/>
            <person name="Strong R."/>
            <person name="Sun E."/>
            <person name="Svirskas R."/>
            <person name="Tector C."/>
            <person name="Turner R."/>
            <person name="Venter E."/>
            <person name="Wang A.H."/>
            <person name="Wang X."/>
            <person name="Wang Z.-Y."/>
            <person name="Wassarman D.A."/>
            <person name="Weinstock G.M."/>
            <person name="Weissenbach J."/>
            <person name="Williams S.M."/>
            <person name="Woodage T."/>
            <person name="Worley K.C."/>
            <person name="Wu D."/>
            <person name="Yang S."/>
            <person name="Yao Q.A."/>
            <person name="Ye J."/>
            <person name="Yeh R.-F."/>
            <person name="Zaveri J.S."/>
            <person name="Zhan M."/>
            <person name="Zhang G."/>
            <person name="Zhao Q."/>
            <person name="Zheng L."/>
            <person name="Zheng X.H."/>
            <person name="Zhong F.N."/>
            <person name="Zhong W."/>
            <person name="Zhou X."/>
            <person name="Zhu S.C."/>
            <person name="Zhu X."/>
            <person name="Smith H.O."/>
            <person name="Gibbs R.A."/>
            <person name="Myers E.W."/>
            <person name="Rubin G.M."/>
            <person name="Venter J.C."/>
        </authorList>
    </citation>
    <scope>NUCLEOTIDE SEQUENCE [LARGE SCALE GENOMIC DNA]</scope>
    <source>
        <strain>Berkeley</strain>
    </source>
</reference>
<reference key="2">
    <citation type="journal article" date="2002" name="Genome Biol.">
        <title>Annotation of the Drosophila melanogaster euchromatic genome: a systematic review.</title>
        <authorList>
            <person name="Misra S."/>
            <person name="Crosby M.A."/>
            <person name="Mungall C.J."/>
            <person name="Matthews B.B."/>
            <person name="Campbell K.S."/>
            <person name="Hradecky P."/>
            <person name="Huang Y."/>
            <person name="Kaminker J.S."/>
            <person name="Millburn G.H."/>
            <person name="Prochnik S.E."/>
            <person name="Smith C.D."/>
            <person name="Tupy J.L."/>
            <person name="Whitfield E.J."/>
            <person name="Bayraktaroglu L."/>
            <person name="Berman B.P."/>
            <person name="Bettencourt B.R."/>
            <person name="Celniker S.E."/>
            <person name="de Grey A.D.N.J."/>
            <person name="Drysdale R.A."/>
            <person name="Harris N.L."/>
            <person name="Richter J."/>
            <person name="Russo S."/>
            <person name="Schroeder A.J."/>
            <person name="Shu S.Q."/>
            <person name="Stapleton M."/>
            <person name="Yamada C."/>
            <person name="Ashburner M."/>
            <person name="Gelbart W.M."/>
            <person name="Rubin G.M."/>
            <person name="Lewis S.E."/>
        </authorList>
    </citation>
    <scope>GENOME REANNOTATION</scope>
    <source>
        <strain>Berkeley</strain>
    </source>
</reference>
<reference key="3">
    <citation type="journal article" date="2002" name="Genome Biol.">
        <title>A Drosophila full-length cDNA resource.</title>
        <authorList>
            <person name="Stapleton M."/>
            <person name="Carlson J.W."/>
            <person name="Brokstein P."/>
            <person name="Yu C."/>
            <person name="Champe M."/>
            <person name="George R.A."/>
            <person name="Guarin H."/>
            <person name="Kronmiller B."/>
            <person name="Pacleb J.M."/>
            <person name="Park S."/>
            <person name="Wan K.H."/>
            <person name="Rubin G.M."/>
            <person name="Celniker S.E."/>
        </authorList>
    </citation>
    <scope>NUCLEOTIDE SEQUENCE [LARGE SCALE MRNA] OF 2109-2860</scope>
    <source>
        <strain>Berkeley</strain>
        <tissue>Embryo</tissue>
        <tissue>Head</tissue>
    </source>
</reference>
<reference key="4">
    <citation type="journal article" date="2015" name="Cell">
        <title>N(6)-methyladenine DNA modification in Drosophila.</title>
        <authorList>
            <person name="Zhang G."/>
            <person name="Huang H."/>
            <person name="Liu D."/>
            <person name="Cheng Y."/>
            <person name="Liu X."/>
            <person name="Zhang W."/>
            <person name="Yin R."/>
            <person name="Zhang D."/>
            <person name="Zhang P."/>
            <person name="Liu J."/>
            <person name="Li C."/>
            <person name="Liu B."/>
            <person name="Luo Y."/>
            <person name="Zhu Y."/>
            <person name="Zhang N."/>
            <person name="He S."/>
            <person name="He C."/>
            <person name="Wang H."/>
            <person name="Chen D."/>
        </authorList>
    </citation>
    <scope>FUNCTION</scope>
    <scope>DEVELOPMENTAL STAGE</scope>
    <scope>DISRUPTION PHENOTYPE</scope>
    <scope>MUTAGENESIS OF 598-CYS--CYS-601 AND 1886-HIS--ASP-1888</scope>
</reference>
<reference key="5">
    <citation type="journal article" date="2018" name="Mol. Cell">
        <title>Active N6-Methyladenine Demethylation by DMAD Regulates Gene Expression by Coordinating with Polycomb Protein in Neurons.</title>
        <authorList>
            <person name="Yao B."/>
            <person name="Li Y."/>
            <person name="Wang Z."/>
            <person name="Chen L."/>
            <person name="Poidevin M."/>
            <person name="Zhang C."/>
            <person name="Lin L."/>
            <person name="Wang F."/>
            <person name="Bao H."/>
            <person name="Jiao B."/>
            <person name="Lim J."/>
            <person name="Cheng Y."/>
            <person name="Huang L."/>
            <person name="Phillips B.L."/>
            <person name="Xu T."/>
            <person name="Duan R."/>
            <person name="Moberg K.H."/>
            <person name="Wu H."/>
            <person name="Jin P."/>
        </authorList>
    </citation>
    <scope>FUNCTION</scope>
    <scope>CATALYTIC ACTIVITY</scope>
    <scope>INTERACTION WITH WDS</scope>
    <scope>SUBCELLULAR LOCATION</scope>
    <scope>TISSUE SPECIFICITY</scope>
    <scope>DISRUPTION PHENOTYPE</scope>
    <scope>MUTAGENESIS OF 1886-HIS--LEU-1889</scope>
</reference>